<name>COG8_SCHPO</name>
<protein>
    <recommendedName>
        <fullName>Conserved oligomeric Golgi complex subunit 8</fullName>
        <shortName>COG complex subunit 8</shortName>
    </recommendedName>
    <alternativeName>
        <fullName>Component of oligomeric Golgi complex 8</fullName>
    </alternativeName>
</protein>
<sequence>MDSIGDNVTEMDAFVRDLTMKPYAELEKRKAELHAQKLKLVQKRQQLLRDNYNVLVDYARNQDAFYQLLENSRHDFKELVLHTNQLYEPVKRSQNFLTSISEHYRDAKLMHQVQPQLSSILELPELMNACIERNYFSETLEFQALAYRLKDRFGTNSIIQELITQVETLVVKLTEKLILQLQKPLKLYSLIKVVTYLRVTAKLSEAQLKYVFLYFSWKQLQTSLRNLVPLLDYNNPELYLRRYIQVIRDRAFSLLFQYQSVFGESSNDRLNAAGTVDIPNSTSTSASPFEMDPEGFNNFGQNILSSFVRKLQLEICYVLQKFMPNVKDSTSKFSLLLQLYYCNQSLTKVGTDISIPLSKILGSEWLEMIHSQSSEKQA</sequence>
<reference key="1">
    <citation type="journal article" date="2000" name="Yeast">
        <title>A 38 kb segment containing the cdc2 gene from the left arm of fission yeast chromosome II: sequence analysis and characterization of the genomic DNA and cDNAs encoded on the segment.</title>
        <authorList>
            <person name="Machida M."/>
            <person name="Yamazaki S."/>
            <person name="Kunihiro S."/>
            <person name="Tanaka T."/>
            <person name="Kushida N."/>
            <person name="Jinno K."/>
            <person name="Haikawa Y."/>
            <person name="Yamazaki J."/>
            <person name="Yamamoto S."/>
            <person name="Sekine M."/>
            <person name="Oguchi A."/>
            <person name="Nagai Y."/>
            <person name="Sakai M."/>
            <person name="Aoki K."/>
            <person name="Ogura K."/>
            <person name="Kudoh Y."/>
            <person name="Kikuchi H."/>
            <person name="Zhang M.Q."/>
            <person name="Yanagida M."/>
        </authorList>
    </citation>
    <scope>NUCLEOTIDE SEQUENCE [LARGE SCALE GENOMIC DNA]</scope>
    <source>
        <strain>972 / ATCC 24843</strain>
    </source>
</reference>
<reference key="2">
    <citation type="journal article" date="2002" name="Nature">
        <title>The genome sequence of Schizosaccharomyces pombe.</title>
        <authorList>
            <person name="Wood V."/>
            <person name="Gwilliam R."/>
            <person name="Rajandream M.A."/>
            <person name="Lyne M.H."/>
            <person name="Lyne R."/>
            <person name="Stewart A."/>
            <person name="Sgouros J.G."/>
            <person name="Peat N."/>
            <person name="Hayles J."/>
            <person name="Baker S.G."/>
            <person name="Basham D."/>
            <person name="Bowman S."/>
            <person name="Brooks K."/>
            <person name="Brown D."/>
            <person name="Brown S."/>
            <person name="Chillingworth T."/>
            <person name="Churcher C.M."/>
            <person name="Collins M."/>
            <person name="Connor R."/>
            <person name="Cronin A."/>
            <person name="Davis P."/>
            <person name="Feltwell T."/>
            <person name="Fraser A."/>
            <person name="Gentles S."/>
            <person name="Goble A."/>
            <person name="Hamlin N."/>
            <person name="Harris D.E."/>
            <person name="Hidalgo J."/>
            <person name="Hodgson G."/>
            <person name="Holroyd S."/>
            <person name="Hornsby T."/>
            <person name="Howarth S."/>
            <person name="Huckle E.J."/>
            <person name="Hunt S."/>
            <person name="Jagels K."/>
            <person name="James K.D."/>
            <person name="Jones L."/>
            <person name="Jones M."/>
            <person name="Leather S."/>
            <person name="McDonald S."/>
            <person name="McLean J."/>
            <person name="Mooney P."/>
            <person name="Moule S."/>
            <person name="Mungall K.L."/>
            <person name="Murphy L.D."/>
            <person name="Niblett D."/>
            <person name="Odell C."/>
            <person name="Oliver K."/>
            <person name="O'Neil S."/>
            <person name="Pearson D."/>
            <person name="Quail M.A."/>
            <person name="Rabbinowitsch E."/>
            <person name="Rutherford K.M."/>
            <person name="Rutter S."/>
            <person name="Saunders D."/>
            <person name="Seeger K."/>
            <person name="Sharp S."/>
            <person name="Skelton J."/>
            <person name="Simmonds M.N."/>
            <person name="Squares R."/>
            <person name="Squares S."/>
            <person name="Stevens K."/>
            <person name="Taylor K."/>
            <person name="Taylor R.G."/>
            <person name="Tivey A."/>
            <person name="Walsh S.V."/>
            <person name="Warren T."/>
            <person name="Whitehead S."/>
            <person name="Woodward J.R."/>
            <person name="Volckaert G."/>
            <person name="Aert R."/>
            <person name="Robben J."/>
            <person name="Grymonprez B."/>
            <person name="Weltjens I."/>
            <person name="Vanstreels E."/>
            <person name="Rieger M."/>
            <person name="Schaefer M."/>
            <person name="Mueller-Auer S."/>
            <person name="Gabel C."/>
            <person name="Fuchs M."/>
            <person name="Duesterhoeft A."/>
            <person name="Fritzc C."/>
            <person name="Holzer E."/>
            <person name="Moestl D."/>
            <person name="Hilbert H."/>
            <person name="Borzym K."/>
            <person name="Langer I."/>
            <person name="Beck A."/>
            <person name="Lehrach H."/>
            <person name="Reinhardt R."/>
            <person name="Pohl T.M."/>
            <person name="Eger P."/>
            <person name="Zimmermann W."/>
            <person name="Wedler H."/>
            <person name="Wambutt R."/>
            <person name="Purnelle B."/>
            <person name="Goffeau A."/>
            <person name="Cadieu E."/>
            <person name="Dreano S."/>
            <person name="Gloux S."/>
            <person name="Lelaure V."/>
            <person name="Mottier S."/>
            <person name="Galibert F."/>
            <person name="Aves S.J."/>
            <person name="Xiang Z."/>
            <person name="Hunt C."/>
            <person name="Moore K."/>
            <person name="Hurst S.M."/>
            <person name="Lucas M."/>
            <person name="Rochet M."/>
            <person name="Gaillardin C."/>
            <person name="Tallada V.A."/>
            <person name="Garzon A."/>
            <person name="Thode G."/>
            <person name="Daga R.R."/>
            <person name="Cruzado L."/>
            <person name="Jimenez J."/>
            <person name="Sanchez M."/>
            <person name="del Rey F."/>
            <person name="Benito J."/>
            <person name="Dominguez A."/>
            <person name="Revuelta J.L."/>
            <person name="Moreno S."/>
            <person name="Armstrong J."/>
            <person name="Forsburg S.L."/>
            <person name="Cerutti L."/>
            <person name="Lowe T."/>
            <person name="McCombie W.R."/>
            <person name="Paulsen I."/>
            <person name="Potashkin J."/>
            <person name="Shpakovski G.V."/>
            <person name="Ussery D."/>
            <person name="Barrell B.G."/>
            <person name="Nurse P."/>
        </authorList>
    </citation>
    <scope>NUCLEOTIDE SEQUENCE [LARGE SCALE GENOMIC DNA]</scope>
    <source>
        <strain>972 / ATCC 24843</strain>
    </source>
</reference>
<feature type="chain" id="PRO_0000356246" description="Conserved oligomeric Golgi complex subunit 8">
    <location>
        <begin position="1"/>
        <end position="378"/>
    </location>
</feature>
<organism>
    <name type="scientific">Schizosaccharomyces pombe (strain 972 / ATCC 24843)</name>
    <name type="common">Fission yeast</name>
    <dbReference type="NCBI Taxonomy" id="284812"/>
    <lineage>
        <taxon>Eukaryota</taxon>
        <taxon>Fungi</taxon>
        <taxon>Dikarya</taxon>
        <taxon>Ascomycota</taxon>
        <taxon>Taphrinomycotina</taxon>
        <taxon>Schizosaccharomycetes</taxon>
        <taxon>Schizosaccharomycetales</taxon>
        <taxon>Schizosaccharomycetaceae</taxon>
        <taxon>Schizosaccharomyces</taxon>
    </lineage>
</organism>
<gene>
    <name type="primary">cog8</name>
    <name type="ORF">pi008</name>
    <name type="ORF">SPBC11B10.03</name>
</gene>
<proteinExistence type="inferred from homology"/>
<dbReference type="EMBL" id="AB004534">
    <property type="protein sequence ID" value="BAA21385.2"/>
    <property type="molecule type" value="Genomic_DNA"/>
</dbReference>
<dbReference type="EMBL" id="CU329671">
    <property type="protein sequence ID" value="CAC37507.2"/>
    <property type="molecule type" value="Genomic_DNA"/>
</dbReference>
<dbReference type="RefSeq" id="NP_595623.2">
    <property type="nucleotide sequence ID" value="NM_001021517.3"/>
</dbReference>
<dbReference type="SMR" id="Q96WW5"/>
<dbReference type="BioGRID" id="276346">
    <property type="interactions" value="1"/>
</dbReference>
<dbReference type="FunCoup" id="Q96WW5">
    <property type="interactions" value="60"/>
</dbReference>
<dbReference type="STRING" id="284812.Q96WW5"/>
<dbReference type="PaxDb" id="4896-SPBC11B10.03.1"/>
<dbReference type="EnsemblFungi" id="SPBC11B10.03.1">
    <property type="protein sequence ID" value="SPBC11B10.03.1:pep"/>
    <property type="gene ID" value="SPBC11B10.03"/>
</dbReference>
<dbReference type="GeneID" id="2539796"/>
<dbReference type="KEGG" id="spo:2539796"/>
<dbReference type="PomBase" id="SPBC11B10.03">
    <property type="gene designation" value="cog8"/>
</dbReference>
<dbReference type="VEuPathDB" id="FungiDB:SPBC11B10.03"/>
<dbReference type="eggNOG" id="KOG2069">
    <property type="taxonomic scope" value="Eukaryota"/>
</dbReference>
<dbReference type="HOGENOM" id="CLU_017968_4_1_1"/>
<dbReference type="InParanoid" id="Q96WW5"/>
<dbReference type="OMA" id="DAMKDMT"/>
<dbReference type="PhylomeDB" id="Q96WW5"/>
<dbReference type="PRO" id="PR:Q96WW5"/>
<dbReference type="Proteomes" id="UP000002485">
    <property type="component" value="Chromosome II"/>
</dbReference>
<dbReference type="GO" id="GO:0000139">
    <property type="term" value="C:Golgi membrane"/>
    <property type="evidence" value="ECO:0007669"/>
    <property type="project" value="UniProtKB-SubCell"/>
</dbReference>
<dbReference type="GO" id="GO:0017119">
    <property type="term" value="C:Golgi transport complex"/>
    <property type="evidence" value="ECO:0000318"/>
    <property type="project" value="GO_Central"/>
</dbReference>
<dbReference type="GO" id="GO:0006891">
    <property type="term" value="P:intra-Golgi vesicle-mediated transport"/>
    <property type="evidence" value="ECO:0000318"/>
    <property type="project" value="GO_Central"/>
</dbReference>
<dbReference type="GO" id="GO:0006886">
    <property type="term" value="P:intracellular protein transport"/>
    <property type="evidence" value="ECO:0000305"/>
    <property type="project" value="PomBase"/>
</dbReference>
<dbReference type="InterPro" id="IPR007255">
    <property type="entry name" value="COG8"/>
</dbReference>
<dbReference type="InterPro" id="IPR016159">
    <property type="entry name" value="Cullin_repeat-like_dom_sf"/>
</dbReference>
<dbReference type="PANTHER" id="PTHR21311">
    <property type="entry name" value="CONSERVED OLIGOMERIC GOLGI COMPLEX COMPONENT 8"/>
    <property type="match status" value="1"/>
</dbReference>
<dbReference type="PANTHER" id="PTHR21311:SF0">
    <property type="entry name" value="CONSERVED OLIGOMERIC GOLGI COMPLEX SUBUNIT 8"/>
    <property type="match status" value="1"/>
</dbReference>
<dbReference type="Pfam" id="PF04124">
    <property type="entry name" value="Dor1"/>
    <property type="match status" value="1"/>
</dbReference>
<dbReference type="SUPFAM" id="SSF74788">
    <property type="entry name" value="Cullin repeat-like"/>
    <property type="match status" value="1"/>
</dbReference>
<accession>Q96WW5</accession>
<accession>O13603</accession>
<comment type="function">
    <text evidence="1">Required for normal Golgi function.</text>
</comment>
<comment type="subunit">
    <text evidence="1">Component of the conserved oligomeric Golgi complex which is composed of eight different subunits and is required for normal Golgi morphology and localization.</text>
</comment>
<comment type="subcellular location">
    <subcellularLocation>
        <location evidence="1">Golgi apparatus membrane</location>
        <topology evidence="1">Peripheral membrane protein</topology>
    </subcellularLocation>
</comment>
<comment type="similarity">
    <text evidence="2">Belongs to the COG8 family.</text>
</comment>
<evidence type="ECO:0000250" key="1"/>
<evidence type="ECO:0000305" key="2"/>
<keyword id="KW-0333">Golgi apparatus</keyword>
<keyword id="KW-0472">Membrane</keyword>
<keyword id="KW-0653">Protein transport</keyword>
<keyword id="KW-1185">Reference proteome</keyword>
<keyword id="KW-0813">Transport</keyword>